<gene>
    <name type="ORF">ORF3b</name>
</gene>
<protein>
    <recommendedName>
        <fullName>Capsid protein</fullName>
        <shortName>CP</shortName>
    </recommendedName>
    <alternativeName>
        <fullName>Coat protein</fullName>
    </alternativeName>
</protein>
<comment type="function">
    <text evidence="1">Capsid protein. Probably binds RNA and plays a role in packaging (By similarity).</text>
</comment>
<comment type="subcellular location">
    <subcellularLocation>
        <location evidence="3">Virion</location>
    </subcellularLocation>
</comment>
<comment type="domain">
    <text evidence="1">The N-terminal arginine-rich stretch does not seem to be the major RNA-binding region that allows formation of an infectious ribonucleoprotein complex.</text>
</comment>
<comment type="similarity">
    <text evidence="3">Belongs to the cucumovirus capsid protein family.</text>
</comment>
<organism>
    <name type="scientific">Cucumber mosaic virus (strain Kor)</name>
    <name type="common">CMV</name>
    <dbReference type="NCBI Taxonomy" id="117116"/>
    <lineage>
        <taxon>Viruses</taxon>
        <taxon>Riboviria</taxon>
        <taxon>Orthornavirae</taxon>
        <taxon>Kitrinoviricota</taxon>
        <taxon>Alsuviricetes</taxon>
        <taxon>Martellivirales</taxon>
        <taxon>Bromoviridae</taxon>
        <taxon>Cucumovirus</taxon>
        <taxon>Cucumber mosaic virus</taxon>
    </lineage>
</organism>
<reference key="1">
    <citation type="submission" date="1994-09" db="EMBL/GenBank/DDBJ databases">
        <authorList>
            <person name="Kim S.J."/>
            <person name="Cho H.S."/>
            <person name="Yu J.S."/>
            <person name="Kwon C.S."/>
            <person name="Kwon S.Y."/>
            <person name="Park E.K."/>
            <person name="Paek K.H."/>
        </authorList>
    </citation>
    <scope>NUCLEOTIDE SEQUENCE [GENOMIC RNA]</scope>
</reference>
<keyword id="KW-0007">Acetylation</keyword>
<keyword id="KW-0167">Capsid protein</keyword>
<keyword id="KW-0687">Ribonucleoprotein</keyword>
<keyword id="KW-0694">RNA-binding</keyword>
<keyword id="KW-1142">T=3 icosahedral capsid protein</keyword>
<keyword id="KW-0543">Viral nucleoprotein</keyword>
<keyword id="KW-0946">Virion</keyword>
<accession>Q83269</accession>
<feature type="chain" id="PRO_0000083210" description="Capsid protein">
    <location>
        <begin position="1"/>
        <end position="218"/>
    </location>
</feature>
<feature type="region of interest" description="Disordered" evidence="2">
    <location>
        <begin position="1"/>
        <end position="30"/>
    </location>
</feature>
<feature type="compositionally biased region" description="Low complexity" evidence="2">
    <location>
        <begin position="1"/>
        <end position="10"/>
    </location>
</feature>
<feature type="compositionally biased region" description="Basic residues" evidence="2">
    <location>
        <begin position="11"/>
        <end position="21"/>
    </location>
</feature>
<feature type="modified residue" description="N-acetylmethionine; by host" evidence="1">
    <location>
        <position position="1"/>
    </location>
</feature>
<proteinExistence type="inferred from homology"/>
<evidence type="ECO:0000250" key="1"/>
<evidence type="ECO:0000256" key="2">
    <source>
        <dbReference type="SAM" id="MobiDB-lite"/>
    </source>
</evidence>
<evidence type="ECO:0000305" key="3"/>
<dbReference type="EMBL" id="L36251">
    <property type="protein sequence ID" value="AAA46418.1"/>
    <property type="molecule type" value="Genomic_RNA"/>
</dbReference>
<dbReference type="SMR" id="Q83269"/>
<dbReference type="GO" id="GO:1990904">
    <property type="term" value="C:ribonucleoprotein complex"/>
    <property type="evidence" value="ECO:0007669"/>
    <property type="project" value="UniProtKB-KW"/>
</dbReference>
<dbReference type="GO" id="GO:0039617">
    <property type="term" value="C:T=3 icosahedral viral capsid"/>
    <property type="evidence" value="ECO:0007669"/>
    <property type="project" value="UniProtKB-KW"/>
</dbReference>
<dbReference type="GO" id="GO:0019013">
    <property type="term" value="C:viral nucleocapsid"/>
    <property type="evidence" value="ECO:0007669"/>
    <property type="project" value="UniProtKB-KW"/>
</dbReference>
<dbReference type="GO" id="GO:0003723">
    <property type="term" value="F:RNA binding"/>
    <property type="evidence" value="ECO:0007669"/>
    <property type="project" value="UniProtKB-KW"/>
</dbReference>
<dbReference type="GO" id="GO:0005198">
    <property type="term" value="F:structural molecule activity"/>
    <property type="evidence" value="ECO:0007669"/>
    <property type="project" value="InterPro"/>
</dbReference>
<dbReference type="Gene3D" id="2.60.120.530">
    <property type="entry name" value="Cucumovirus coat protein, subunit A"/>
    <property type="match status" value="1"/>
</dbReference>
<dbReference type="InterPro" id="IPR000247">
    <property type="entry name" value="Cucumovirus_coat"/>
</dbReference>
<dbReference type="InterPro" id="IPR037137">
    <property type="entry name" value="Cucumovirus_coat_Asu_sf"/>
</dbReference>
<dbReference type="Pfam" id="PF00760">
    <property type="entry name" value="Cucumo_coat"/>
    <property type="match status" value="1"/>
</dbReference>
<dbReference type="PRINTS" id="PR00222">
    <property type="entry name" value="CUCUMOCOAT"/>
</dbReference>
<dbReference type="SUPFAM" id="SSF88633">
    <property type="entry name" value="Positive stranded ssRNA viruses"/>
    <property type="match status" value="1"/>
</dbReference>
<organismHost>
    <name type="scientific">Cucumis sativus</name>
    <name type="common">Cucumber</name>
    <dbReference type="NCBI Taxonomy" id="3659"/>
</organismHost>
<organismHost>
    <name type="scientific">Solanum lycopersicum</name>
    <name type="common">Tomato</name>
    <name type="synonym">Lycopersicon esculentum</name>
    <dbReference type="NCBI Taxonomy" id="4081"/>
</organismHost>
<organismHost>
    <name type="scientific">Spinacia oleracea</name>
    <name type="common">Spinach</name>
    <dbReference type="NCBI Taxonomy" id="3562"/>
</organismHost>
<sequence>MDKSESTSAGRNRRRRLRRGSRSAPSSSDANFRVLSQQLSRLNKTLSAGRPTINHPTFVGTERCKPGYTFTSITSKPPKIDRGSYYGKRLLLPDSVTEYDKKLVSRIQIRVNPLPKFDSTVWVTVRKVPASSDLSVPAISAMFPDGPSPVLVYQYAASGVQANNKLLYDLSAMRADIGDMRKYAVLVYAKDDALATDELVLHVDVEHQRIPTSGVLPV</sequence>
<name>CAPSD_CMVKO</name>